<proteinExistence type="evidence at transcript level"/>
<feature type="initiator methionine" description="Removed" evidence="1">
    <location>
        <position position="1"/>
    </location>
</feature>
<feature type="chain" id="PRO_0000314936" description="Arginine/serine-rich coiled-coil protein 2">
    <location>
        <begin position="2"/>
        <end position="435"/>
    </location>
</feature>
<feature type="region of interest" description="Disordered" evidence="3">
    <location>
        <begin position="1"/>
        <end position="230"/>
    </location>
</feature>
<feature type="coiled-coil region" evidence="2">
    <location>
        <begin position="230"/>
        <end position="272"/>
    </location>
</feature>
<feature type="compositionally biased region" description="Basic and acidic residues" evidence="3">
    <location>
        <begin position="1"/>
        <end position="27"/>
    </location>
</feature>
<feature type="compositionally biased region" description="Basic residues" evidence="3">
    <location>
        <begin position="35"/>
        <end position="51"/>
    </location>
</feature>
<feature type="compositionally biased region" description="Basic and acidic residues" evidence="3">
    <location>
        <begin position="66"/>
        <end position="111"/>
    </location>
</feature>
<feature type="compositionally biased region" description="Basic residues" evidence="3">
    <location>
        <begin position="112"/>
        <end position="214"/>
    </location>
</feature>
<feature type="modified residue" description="N-acetylalanine" evidence="1">
    <location>
        <position position="2"/>
    </location>
</feature>
<feature type="modified residue" description="Phosphoserine" evidence="1">
    <location>
        <position position="4"/>
    </location>
</feature>
<feature type="modified residue" description="Phosphothreonine" evidence="1">
    <location>
        <position position="6"/>
    </location>
</feature>
<feature type="modified residue" description="Phosphothreonine" evidence="1">
    <location>
        <position position="16"/>
    </location>
</feature>
<feature type="modified residue" description="Phosphoserine" evidence="1">
    <location>
        <position position="17"/>
    </location>
</feature>
<feature type="modified residue" description="Phosphoserine" evidence="1">
    <location>
        <position position="30"/>
    </location>
</feature>
<feature type="modified residue" description="Phosphoserine" evidence="1">
    <location>
        <position position="32"/>
    </location>
</feature>
<feature type="modified residue" description="Phosphoserine" evidence="1">
    <location>
        <position position="104"/>
    </location>
</feature>
<feature type="modified residue" description="Phosphoserine" evidence="1">
    <location>
        <position position="377"/>
    </location>
</feature>
<feature type="cross-link" description="Glycyl lysine isopeptide (Lys-Gly) (interchain with G-Cter in SUMO1); alternate" evidence="1">
    <location>
        <position position="376"/>
    </location>
</feature>
<feature type="cross-link" description="Glycyl lysine isopeptide (Lys-Gly) (interchain with G-Cter in SUMO2); alternate" evidence="1">
    <location>
        <position position="376"/>
    </location>
</feature>
<feature type="splice variant" id="VSP_030439" description="In isoform 2." evidence="4">
    <original>MAASDTERDGLAPEKTSPDTDKKKEQSDVSVSPRASKHHYSRSRSRSRERKRKSDNEGRKHRSRSRSKE</original>
    <variation>MIRTNFFLKQ</variation>
    <location>
        <begin position="1"/>
        <end position="69"/>
    </location>
</feature>
<comment type="alternative products">
    <event type="alternative splicing"/>
    <isoform>
        <id>A6QLS2-1</id>
        <name>1</name>
        <sequence type="displayed"/>
    </isoform>
    <isoform>
        <id>A6QLS2-2</id>
        <name>2</name>
        <sequence type="described" ref="VSP_030439"/>
    </isoform>
</comment>
<comment type="similarity">
    <text evidence="5">Belongs to the RSRC2 family.</text>
</comment>
<evidence type="ECO:0000250" key="1">
    <source>
        <dbReference type="UniProtKB" id="Q7L4I2"/>
    </source>
</evidence>
<evidence type="ECO:0000255" key="2"/>
<evidence type="ECO:0000256" key="3">
    <source>
        <dbReference type="SAM" id="MobiDB-lite"/>
    </source>
</evidence>
<evidence type="ECO:0000303" key="4">
    <source ref="2"/>
</evidence>
<evidence type="ECO:0000305" key="5"/>
<name>RSRC2_BOVIN</name>
<gene>
    <name type="primary">RSRC2</name>
</gene>
<sequence>MAASDTERDGLAPEKTSPDTDKKKEQSDVSVSPRASKHHYSRSRSRSRERKRKSDNEGRKHRSRSRSKEARRHESKDKSSKKHKSEEHNDKEHSSDKGRERLNSSENGEDRHKRKERKSSRGRSHSRSRSRERRHRSRSRERKKSRSRSRDRKKSRSRSRERKKSRSRSRERKRRIRSRSRSRSRHRHRSRSRSRTRSRSRDRKKRIEKPRRFSRSLSRTPSPPPFRGRNTAMDAQEALARRLERAKKLQEQREKEMVEKQKQQEIAAAAAATGGSVLNVAALLASGTQVTPQIAMAAQMAALQAKALAETGIAVPSYYNPAAVNPMKFAEQEKKRKMLWQGKKEGDKSQSAEIWEKLNFGNKDQNVKFRKLMGIKSEDEAGCSSVDEESYKTLKQQEEVFRNLDAQYEMARSQTHTQRGMGLGFTSSMRGMDTV</sequence>
<dbReference type="EMBL" id="BT030691">
    <property type="protein sequence ID" value="ABS45007.1"/>
    <property type="molecule type" value="mRNA"/>
</dbReference>
<dbReference type="EMBL" id="BC148066">
    <property type="protein sequence ID" value="AAI48067.1"/>
    <property type="molecule type" value="mRNA"/>
</dbReference>
<dbReference type="RefSeq" id="NP_001095616.1">
    <molecule id="A6QLS2-2"/>
    <property type="nucleotide sequence ID" value="NM_001102146.1"/>
</dbReference>
<dbReference type="RefSeq" id="XP_005217927.1">
    <molecule id="A6QLS2-1"/>
    <property type="nucleotide sequence ID" value="XM_005217870.4"/>
</dbReference>
<dbReference type="SMR" id="A6QLS2"/>
<dbReference type="FunCoup" id="A6QLS2">
    <property type="interactions" value="3295"/>
</dbReference>
<dbReference type="STRING" id="9913.ENSBTAP00000008042"/>
<dbReference type="PaxDb" id="9913-ENSBTAP00000008042"/>
<dbReference type="Ensembl" id="ENSBTAT00000008042.6">
    <molecule id="A6QLS2-2"/>
    <property type="protein sequence ID" value="ENSBTAP00000008042.5"/>
    <property type="gene ID" value="ENSBTAG00000006118.6"/>
</dbReference>
<dbReference type="GeneID" id="532701"/>
<dbReference type="KEGG" id="bta:532701"/>
<dbReference type="CTD" id="65117"/>
<dbReference type="VEuPathDB" id="HostDB:ENSBTAG00000006118"/>
<dbReference type="eggNOG" id="ENOG502QQ3C">
    <property type="taxonomic scope" value="Eukaryota"/>
</dbReference>
<dbReference type="GeneTree" id="ENSGT00730000111142"/>
<dbReference type="HOGENOM" id="CLU_051694_0_0_1"/>
<dbReference type="InParanoid" id="A6QLS2"/>
<dbReference type="OMA" id="QEEMFKN"/>
<dbReference type="OrthoDB" id="1928974at2759"/>
<dbReference type="TreeFam" id="TF325523"/>
<dbReference type="Proteomes" id="UP000009136">
    <property type="component" value="Chromosome 17"/>
</dbReference>
<dbReference type="Bgee" id="ENSBTAG00000006118">
    <property type="expression patterns" value="Expressed in intramuscular adipose tissue and 108 other cell types or tissues"/>
</dbReference>
<dbReference type="InterPro" id="IPR028124">
    <property type="entry name" value="SMAP_dom"/>
</dbReference>
<dbReference type="PANTHER" id="PTHR22426">
    <property type="entry name" value="ARGININE_SERINE-RICH COILED-COIL PROTEIN 2"/>
    <property type="match status" value="1"/>
</dbReference>
<dbReference type="PANTHER" id="PTHR22426:SF2">
    <property type="entry name" value="ARGININE_SERINE-RICH COILED-COIL PROTEIN 2"/>
    <property type="match status" value="1"/>
</dbReference>
<dbReference type="Pfam" id="PF15477">
    <property type="entry name" value="SMAP"/>
    <property type="match status" value="1"/>
</dbReference>
<accession>A6QLS2</accession>
<accession>A7E3S0</accession>
<organism>
    <name type="scientific">Bos taurus</name>
    <name type="common">Bovine</name>
    <dbReference type="NCBI Taxonomy" id="9913"/>
    <lineage>
        <taxon>Eukaryota</taxon>
        <taxon>Metazoa</taxon>
        <taxon>Chordata</taxon>
        <taxon>Craniata</taxon>
        <taxon>Vertebrata</taxon>
        <taxon>Euteleostomi</taxon>
        <taxon>Mammalia</taxon>
        <taxon>Eutheria</taxon>
        <taxon>Laurasiatheria</taxon>
        <taxon>Artiodactyla</taxon>
        <taxon>Ruminantia</taxon>
        <taxon>Pecora</taxon>
        <taxon>Bovidae</taxon>
        <taxon>Bovinae</taxon>
        <taxon>Bos</taxon>
    </lineage>
</organism>
<protein>
    <recommendedName>
        <fullName>Arginine/serine-rich coiled-coil protein 2</fullName>
    </recommendedName>
</protein>
<reference key="1">
    <citation type="journal article" date="2005" name="BMC Genomics">
        <title>Characterization of 954 bovine full-CDS cDNA sequences.</title>
        <authorList>
            <person name="Harhay G.P."/>
            <person name="Sonstegard T.S."/>
            <person name="Keele J.W."/>
            <person name="Heaton M.P."/>
            <person name="Clawson M.L."/>
            <person name="Snelling W.M."/>
            <person name="Wiedmann R.T."/>
            <person name="Van Tassell C.P."/>
            <person name="Smith T.P.L."/>
        </authorList>
    </citation>
    <scope>NUCLEOTIDE SEQUENCE [LARGE SCALE MRNA] (ISOFORM 1)</scope>
</reference>
<reference key="2">
    <citation type="submission" date="2007-06" db="EMBL/GenBank/DDBJ databases">
        <authorList>
            <consortium name="NIH - Mammalian Gene Collection (MGC) project"/>
        </authorList>
    </citation>
    <scope>NUCLEOTIDE SEQUENCE [LARGE SCALE MRNA] (ISOFORM 2)</scope>
    <source>
        <strain>Hereford</strain>
        <tissue>Fetal skin</tissue>
    </source>
</reference>
<keyword id="KW-0007">Acetylation</keyword>
<keyword id="KW-0025">Alternative splicing</keyword>
<keyword id="KW-0175">Coiled coil</keyword>
<keyword id="KW-1017">Isopeptide bond</keyword>
<keyword id="KW-0597">Phosphoprotein</keyword>
<keyword id="KW-1185">Reference proteome</keyword>
<keyword id="KW-0832">Ubl conjugation</keyword>